<keyword id="KW-0963">Cytoplasm</keyword>
<keyword id="KW-0238">DNA-binding</keyword>
<feature type="chain" id="PRO_1000078776" description="Nucleoid-associated protein SaurJH9_0500">
    <location>
        <begin position="1"/>
        <end position="105"/>
    </location>
</feature>
<feature type="region of interest" description="Disordered" evidence="2">
    <location>
        <begin position="1"/>
        <end position="33"/>
    </location>
</feature>
<feature type="compositionally biased region" description="Low complexity" evidence="2">
    <location>
        <begin position="7"/>
        <end position="16"/>
    </location>
</feature>
<feature type="compositionally biased region" description="Basic and acidic residues" evidence="2">
    <location>
        <begin position="21"/>
        <end position="33"/>
    </location>
</feature>
<accession>A5IQ31</accession>
<proteinExistence type="inferred from homology"/>
<sequence>MRGGGNMQQMMKQMQKMQKKMAQEQKKLKEERIVGTAGGGMVAVTVTGHKEVVDVEIKEEAVDPDDIEMLQDLVLAATNEAMNKADELTQERLGKHTQGLNIPGM</sequence>
<organism>
    <name type="scientific">Staphylococcus aureus (strain JH9)</name>
    <dbReference type="NCBI Taxonomy" id="359786"/>
    <lineage>
        <taxon>Bacteria</taxon>
        <taxon>Bacillati</taxon>
        <taxon>Bacillota</taxon>
        <taxon>Bacilli</taxon>
        <taxon>Bacillales</taxon>
        <taxon>Staphylococcaceae</taxon>
        <taxon>Staphylococcus</taxon>
    </lineage>
</organism>
<reference key="1">
    <citation type="submission" date="2007-05" db="EMBL/GenBank/DDBJ databases">
        <title>Complete sequence of chromosome of Staphylococcus aureus subsp. aureus JH9.</title>
        <authorList>
            <consortium name="US DOE Joint Genome Institute"/>
            <person name="Copeland A."/>
            <person name="Lucas S."/>
            <person name="Lapidus A."/>
            <person name="Barry K."/>
            <person name="Detter J.C."/>
            <person name="Glavina del Rio T."/>
            <person name="Hammon N."/>
            <person name="Israni S."/>
            <person name="Pitluck S."/>
            <person name="Chain P."/>
            <person name="Malfatti S."/>
            <person name="Shin M."/>
            <person name="Vergez L."/>
            <person name="Schmutz J."/>
            <person name="Larimer F."/>
            <person name="Land M."/>
            <person name="Hauser L."/>
            <person name="Kyrpides N."/>
            <person name="Kim E."/>
            <person name="Tomasz A."/>
            <person name="Richardson P."/>
        </authorList>
    </citation>
    <scope>NUCLEOTIDE SEQUENCE [LARGE SCALE GENOMIC DNA]</scope>
    <source>
        <strain>JH9</strain>
    </source>
</reference>
<comment type="function">
    <text evidence="1">Binds to DNA and alters its conformation. May be involved in regulation of gene expression, nucleoid organization and DNA protection.</text>
</comment>
<comment type="subunit">
    <text evidence="1">Homodimer.</text>
</comment>
<comment type="subcellular location">
    <subcellularLocation>
        <location evidence="1">Cytoplasm</location>
        <location evidence="1">Nucleoid</location>
    </subcellularLocation>
</comment>
<comment type="similarity">
    <text evidence="1">Belongs to the YbaB/EbfC family.</text>
</comment>
<dbReference type="EMBL" id="CP000703">
    <property type="protein sequence ID" value="ABQ48304.1"/>
    <property type="molecule type" value="Genomic_DNA"/>
</dbReference>
<dbReference type="RefSeq" id="WP_001213994.1">
    <property type="nucleotide sequence ID" value="NC_009487.1"/>
</dbReference>
<dbReference type="SMR" id="A5IQ31"/>
<dbReference type="KEGG" id="saj:SaurJH9_0500"/>
<dbReference type="HOGENOM" id="CLU_140930_1_0_9"/>
<dbReference type="GO" id="GO:0043590">
    <property type="term" value="C:bacterial nucleoid"/>
    <property type="evidence" value="ECO:0007669"/>
    <property type="project" value="UniProtKB-UniRule"/>
</dbReference>
<dbReference type="GO" id="GO:0005829">
    <property type="term" value="C:cytosol"/>
    <property type="evidence" value="ECO:0007669"/>
    <property type="project" value="TreeGrafter"/>
</dbReference>
<dbReference type="GO" id="GO:0003677">
    <property type="term" value="F:DNA binding"/>
    <property type="evidence" value="ECO:0007669"/>
    <property type="project" value="UniProtKB-UniRule"/>
</dbReference>
<dbReference type="FunFam" id="3.30.1310.10:FF:000002">
    <property type="entry name" value="Nucleoid-associated protein IKC_06587"/>
    <property type="match status" value="1"/>
</dbReference>
<dbReference type="Gene3D" id="3.30.1310.10">
    <property type="entry name" value="Nucleoid-associated protein YbaB-like domain"/>
    <property type="match status" value="1"/>
</dbReference>
<dbReference type="HAMAP" id="MF_00274">
    <property type="entry name" value="DNA_YbaB_EbfC"/>
    <property type="match status" value="1"/>
</dbReference>
<dbReference type="InterPro" id="IPR036894">
    <property type="entry name" value="YbaB-like_sf"/>
</dbReference>
<dbReference type="InterPro" id="IPR004401">
    <property type="entry name" value="YbaB/EbfC"/>
</dbReference>
<dbReference type="NCBIfam" id="TIGR00103">
    <property type="entry name" value="DNA_YbaB_EbfC"/>
    <property type="match status" value="1"/>
</dbReference>
<dbReference type="PANTHER" id="PTHR33449">
    <property type="entry name" value="NUCLEOID-ASSOCIATED PROTEIN YBAB"/>
    <property type="match status" value="1"/>
</dbReference>
<dbReference type="PANTHER" id="PTHR33449:SF1">
    <property type="entry name" value="NUCLEOID-ASSOCIATED PROTEIN YBAB"/>
    <property type="match status" value="1"/>
</dbReference>
<dbReference type="Pfam" id="PF02575">
    <property type="entry name" value="YbaB_DNA_bd"/>
    <property type="match status" value="1"/>
</dbReference>
<dbReference type="PIRSF" id="PIRSF004555">
    <property type="entry name" value="UCP004555"/>
    <property type="match status" value="1"/>
</dbReference>
<dbReference type="SUPFAM" id="SSF82607">
    <property type="entry name" value="YbaB-like"/>
    <property type="match status" value="1"/>
</dbReference>
<evidence type="ECO:0000255" key="1">
    <source>
        <dbReference type="HAMAP-Rule" id="MF_00274"/>
    </source>
</evidence>
<evidence type="ECO:0000256" key="2">
    <source>
        <dbReference type="SAM" id="MobiDB-lite"/>
    </source>
</evidence>
<protein>
    <recommendedName>
        <fullName evidence="1">Nucleoid-associated protein SaurJH9_0500</fullName>
    </recommendedName>
</protein>
<name>Y500_STAA9</name>
<gene>
    <name type="ordered locus">SaurJH9_0500</name>
</gene>